<sequence length="234" mass="26418">MAERIPAVTVKTDGRKRRWHQHKVERRNELVDGTIEAIRRHGRFLSMDEIAAEIGVSKTVLYRYFVDKNDLTTAVMMRFTQTTLIPNMIAALSADMDGFELTREIIRVYVETVAAQPEPYRFVMANSSASKSKVIADSERIIARMLAVMLRRRMQEAGMDTGGVEPWAYLIVGGVQLATHSWMSDPRMSSDELIDYLTMLSWSALCGIVEAGGSLEKFREQPHPSPIVPAWGQV</sequence>
<accession>P9WMD8</accession>
<accession>L0T3U8</accession>
<accession>O53757</accession>
<accession>Q7D9R3</accession>
<organism>
    <name type="scientific">Mycobacterium tuberculosis (strain CDC 1551 / Oshkosh)</name>
    <dbReference type="NCBI Taxonomy" id="83331"/>
    <lineage>
        <taxon>Bacteria</taxon>
        <taxon>Bacillati</taxon>
        <taxon>Actinomycetota</taxon>
        <taxon>Actinomycetes</taxon>
        <taxon>Mycobacteriales</taxon>
        <taxon>Mycobacteriaceae</taxon>
        <taxon>Mycobacterium</taxon>
        <taxon>Mycobacterium tuberculosis complex</taxon>
    </lineage>
</organism>
<gene>
    <name type="ordered locus">MT0489</name>
</gene>
<keyword id="KW-0238">DNA-binding</keyword>
<keyword id="KW-1185">Reference proteome</keyword>
<keyword id="KW-0804">Transcription</keyword>
<keyword id="KW-0805">Transcription regulation</keyword>
<proteinExistence type="predicted"/>
<evidence type="ECO:0000255" key="1">
    <source>
        <dbReference type="PROSITE-ProRule" id="PRU00335"/>
    </source>
</evidence>
<evidence type="ECO:0000305" key="2"/>
<dbReference type="EMBL" id="AE000516">
    <property type="protein sequence ID" value="AAK44712.1"/>
    <property type="status" value="ALT_INIT"/>
    <property type="molecule type" value="Genomic_DNA"/>
</dbReference>
<dbReference type="PIR" id="D70829">
    <property type="entry name" value="D70829"/>
</dbReference>
<dbReference type="RefSeq" id="WP_003402330.1">
    <property type="nucleotide sequence ID" value="NZ_KK341227.1"/>
</dbReference>
<dbReference type="SMR" id="P9WMD8"/>
<dbReference type="KEGG" id="mtc:MT0489"/>
<dbReference type="PATRIC" id="fig|83331.31.peg.519"/>
<dbReference type="HOGENOM" id="CLU_069356_11_1_11"/>
<dbReference type="Proteomes" id="UP000001020">
    <property type="component" value="Chromosome"/>
</dbReference>
<dbReference type="GO" id="GO:0003700">
    <property type="term" value="F:DNA-binding transcription factor activity"/>
    <property type="evidence" value="ECO:0007669"/>
    <property type="project" value="TreeGrafter"/>
</dbReference>
<dbReference type="GO" id="GO:0000976">
    <property type="term" value="F:transcription cis-regulatory region binding"/>
    <property type="evidence" value="ECO:0007669"/>
    <property type="project" value="TreeGrafter"/>
</dbReference>
<dbReference type="FunFam" id="1.10.357.10:FF:000017">
    <property type="entry name" value="TetR family transcriptional regulator"/>
    <property type="match status" value="1"/>
</dbReference>
<dbReference type="Gene3D" id="1.10.357.10">
    <property type="entry name" value="Tetracycline Repressor, domain 2"/>
    <property type="match status" value="1"/>
</dbReference>
<dbReference type="InterPro" id="IPR009057">
    <property type="entry name" value="Homeodomain-like_sf"/>
</dbReference>
<dbReference type="InterPro" id="IPR050109">
    <property type="entry name" value="HTH-type_TetR-like_transc_reg"/>
</dbReference>
<dbReference type="InterPro" id="IPR001647">
    <property type="entry name" value="HTH_TetR"/>
</dbReference>
<dbReference type="InterPro" id="IPR036271">
    <property type="entry name" value="Tet_transcr_reg_TetR-rel_C_sf"/>
</dbReference>
<dbReference type="InterPro" id="IPR045823">
    <property type="entry name" value="TetR_C_32"/>
</dbReference>
<dbReference type="PANTHER" id="PTHR30055">
    <property type="entry name" value="HTH-TYPE TRANSCRIPTIONAL REGULATOR RUTR"/>
    <property type="match status" value="1"/>
</dbReference>
<dbReference type="PANTHER" id="PTHR30055:SF160">
    <property type="entry name" value="TRANSCRIPTIONAL REGULATORY PROTEIN (PROBABLY ASNC-FAMILY)-RELATED"/>
    <property type="match status" value="1"/>
</dbReference>
<dbReference type="Pfam" id="PF19344">
    <property type="entry name" value="TetR_C_32"/>
    <property type="match status" value="1"/>
</dbReference>
<dbReference type="Pfam" id="PF00440">
    <property type="entry name" value="TetR_N"/>
    <property type="match status" value="1"/>
</dbReference>
<dbReference type="SUPFAM" id="SSF46689">
    <property type="entry name" value="Homeodomain-like"/>
    <property type="match status" value="1"/>
</dbReference>
<dbReference type="SUPFAM" id="SSF48498">
    <property type="entry name" value="Tetracyclin repressor-like, C-terminal domain"/>
    <property type="match status" value="1"/>
</dbReference>
<dbReference type="PROSITE" id="PS50977">
    <property type="entry name" value="HTH_TETR_2"/>
    <property type="match status" value="1"/>
</dbReference>
<name>Y472_MYCTO</name>
<comment type="sequence caution" evidence="2">
    <conflict type="erroneous initiation">
        <sequence resource="EMBL-CDS" id="AAK44712"/>
    </conflict>
</comment>
<reference key="1">
    <citation type="journal article" date="2002" name="J. Bacteriol.">
        <title>Whole-genome comparison of Mycobacterium tuberculosis clinical and laboratory strains.</title>
        <authorList>
            <person name="Fleischmann R.D."/>
            <person name="Alland D."/>
            <person name="Eisen J.A."/>
            <person name="Carpenter L."/>
            <person name="White O."/>
            <person name="Peterson J.D."/>
            <person name="DeBoy R.T."/>
            <person name="Dodson R.J."/>
            <person name="Gwinn M.L."/>
            <person name="Haft D.H."/>
            <person name="Hickey E.K."/>
            <person name="Kolonay J.F."/>
            <person name="Nelson W.C."/>
            <person name="Umayam L.A."/>
            <person name="Ermolaeva M.D."/>
            <person name="Salzberg S.L."/>
            <person name="Delcher A."/>
            <person name="Utterback T.R."/>
            <person name="Weidman J.F."/>
            <person name="Khouri H.M."/>
            <person name="Gill J."/>
            <person name="Mikula A."/>
            <person name="Bishai W."/>
            <person name="Jacobs W.R. Jr."/>
            <person name="Venter J.C."/>
            <person name="Fraser C.M."/>
        </authorList>
    </citation>
    <scope>NUCLEOTIDE SEQUENCE [LARGE SCALE GENOMIC DNA]</scope>
    <source>
        <strain>CDC 1551 / Oshkosh</strain>
    </source>
</reference>
<protein>
    <recommendedName>
        <fullName>Uncharacterized HTH-type transcriptional regulator MT0489</fullName>
    </recommendedName>
</protein>
<feature type="chain" id="PRO_0000427321" description="Uncharacterized HTH-type transcriptional regulator MT0489">
    <location>
        <begin position="1"/>
        <end position="234"/>
    </location>
</feature>
<feature type="domain" description="HTH tetR-type" evidence="1">
    <location>
        <begin position="24"/>
        <end position="83"/>
    </location>
</feature>
<feature type="DNA-binding region" description="H-T-H motif" evidence="1">
    <location>
        <begin position="46"/>
        <end position="65"/>
    </location>
</feature>